<reference key="1">
    <citation type="submission" date="2005-08" db="EMBL/GenBank/DDBJ databases">
        <authorList>
            <consortium name="NIH - Mammalian Gene Collection (MGC) project"/>
        </authorList>
    </citation>
    <scope>NUCLEOTIDE SEQUENCE [LARGE SCALE MRNA]</scope>
    <source>
        <strain>Crossbred X Angus</strain>
        <tissue>Ileum</tissue>
    </source>
</reference>
<evidence type="ECO:0000250" key="1">
    <source>
        <dbReference type="UniProtKB" id="Q9NR31"/>
    </source>
</evidence>
<evidence type="ECO:0000250" key="2">
    <source>
        <dbReference type="UniProtKB" id="Q9QVY3"/>
    </source>
</evidence>
<evidence type="ECO:0000250" key="3">
    <source>
        <dbReference type="UniProtKB" id="Q9Y6B6"/>
    </source>
</evidence>
<evidence type="ECO:0000305" key="4"/>
<feature type="chain" id="PRO_0000249775" description="Small COPII coat GTPase SAR1A">
    <location>
        <begin position="1"/>
        <end position="198"/>
    </location>
</feature>
<feature type="region of interest" description="Mediates recruitment to ER membranes" evidence="2">
    <location>
        <begin position="15"/>
        <end position="19"/>
    </location>
</feature>
<feature type="short sequence motif" description="STAR; SAR1-N-terminal activation recruitment. Required for the activation by PREB and subsequent recruitment to ER membrane" evidence="2">
    <location>
        <begin position="3"/>
        <end position="5"/>
    </location>
</feature>
<feature type="binding site" evidence="1">
    <location>
        <position position="34"/>
    </location>
    <ligand>
        <name>Mg(2+)</name>
        <dbReference type="ChEBI" id="CHEBI:18420"/>
    </ligand>
</feature>
<feature type="binding site" evidence="1">
    <location>
        <position position="35"/>
    </location>
    <ligand>
        <name>GDP</name>
        <dbReference type="ChEBI" id="CHEBI:58189"/>
    </ligand>
</feature>
<feature type="binding site" evidence="3">
    <location>
        <position position="35"/>
    </location>
    <ligand>
        <name>GTP</name>
        <dbReference type="ChEBI" id="CHEBI:37565"/>
    </ligand>
</feature>
<feature type="binding site" evidence="1">
    <location>
        <position position="36"/>
    </location>
    <ligand>
        <name>GDP</name>
        <dbReference type="ChEBI" id="CHEBI:58189"/>
    </ligand>
</feature>
<feature type="binding site" evidence="1">
    <location>
        <position position="37"/>
    </location>
    <ligand>
        <name>GDP</name>
        <dbReference type="ChEBI" id="CHEBI:58189"/>
    </ligand>
</feature>
<feature type="binding site" evidence="3">
    <location>
        <position position="37"/>
    </location>
    <ligand>
        <name>GTP</name>
        <dbReference type="ChEBI" id="CHEBI:37565"/>
    </ligand>
</feature>
<feature type="binding site" evidence="1">
    <location>
        <position position="38"/>
    </location>
    <ligand>
        <name>GDP</name>
        <dbReference type="ChEBI" id="CHEBI:58189"/>
    </ligand>
</feature>
<feature type="binding site" evidence="3">
    <location>
        <position position="38"/>
    </location>
    <ligand>
        <name>GTP</name>
        <dbReference type="ChEBI" id="CHEBI:37565"/>
    </ligand>
</feature>
<feature type="binding site" evidence="1">
    <location>
        <position position="39"/>
    </location>
    <ligand>
        <name>GDP</name>
        <dbReference type="ChEBI" id="CHEBI:58189"/>
    </ligand>
</feature>
<feature type="binding site" evidence="3">
    <location>
        <position position="39"/>
    </location>
    <ligand>
        <name>GTP</name>
        <dbReference type="ChEBI" id="CHEBI:37565"/>
    </ligand>
</feature>
<feature type="binding site" evidence="1">
    <location>
        <position position="40"/>
    </location>
    <ligand>
        <name>GDP</name>
        <dbReference type="ChEBI" id="CHEBI:58189"/>
    </ligand>
</feature>
<feature type="binding site" evidence="3">
    <location>
        <position position="40"/>
    </location>
    <ligand>
        <name>GTP</name>
        <dbReference type="ChEBI" id="CHEBI:37565"/>
    </ligand>
</feature>
<feature type="binding site" evidence="1">
    <location>
        <position position="75"/>
    </location>
    <ligand>
        <name>Mg(2+)</name>
        <dbReference type="ChEBI" id="CHEBI:18420"/>
    </ligand>
</feature>
<feature type="binding site" evidence="1">
    <location>
        <position position="134"/>
    </location>
    <ligand>
        <name>GDP</name>
        <dbReference type="ChEBI" id="CHEBI:58189"/>
    </ligand>
</feature>
<feature type="binding site" evidence="3">
    <location>
        <position position="134"/>
    </location>
    <ligand>
        <name>GTP</name>
        <dbReference type="ChEBI" id="CHEBI:37565"/>
    </ligand>
</feature>
<feature type="binding site" evidence="1">
    <location>
        <position position="135"/>
    </location>
    <ligand>
        <name>GDP</name>
        <dbReference type="ChEBI" id="CHEBI:58189"/>
    </ligand>
</feature>
<feature type="binding site" evidence="3">
    <location>
        <position position="135"/>
    </location>
    <ligand>
        <name>GTP</name>
        <dbReference type="ChEBI" id="CHEBI:37565"/>
    </ligand>
</feature>
<feature type="binding site" evidence="1">
    <location>
        <position position="137"/>
    </location>
    <ligand>
        <name>GDP</name>
        <dbReference type="ChEBI" id="CHEBI:58189"/>
    </ligand>
</feature>
<feature type="binding site" evidence="3">
    <location>
        <position position="137"/>
    </location>
    <ligand>
        <name>GTP</name>
        <dbReference type="ChEBI" id="CHEBI:37565"/>
    </ligand>
</feature>
<feature type="binding site" evidence="1">
    <location>
        <position position="180"/>
    </location>
    <ligand>
        <name>GDP</name>
        <dbReference type="ChEBI" id="CHEBI:58189"/>
    </ligand>
</feature>
<feature type="binding site" evidence="3">
    <location>
        <position position="180"/>
    </location>
    <ligand>
        <name>GTP</name>
        <dbReference type="ChEBI" id="CHEBI:37565"/>
    </ligand>
</feature>
<feature type="binding site" evidence="1">
    <location>
        <position position="181"/>
    </location>
    <ligand>
        <name>GDP</name>
        <dbReference type="ChEBI" id="CHEBI:58189"/>
    </ligand>
</feature>
<feature type="binding site" evidence="3">
    <location>
        <position position="181"/>
    </location>
    <ligand>
        <name>GTP</name>
        <dbReference type="ChEBI" id="CHEBI:37565"/>
    </ligand>
</feature>
<feature type="modified residue" description="Phosphothreonine" evidence="1">
    <location>
        <position position="139"/>
    </location>
</feature>
<proteinExistence type="evidence at transcript level"/>
<sequence>MSFIFEWIYNGFSSVLQFLGLYKKSGKLVFLGLDNAGKTTLLHMLKDDRLGQHVPTLHPTSEELTIAGMTFTTFDLGGHEQARRVWKNYLPAINGIVFLVDCADHPRLMESKVELNALMTDETISNVPILILGNKIDRTDAISEEKLREIFGLYGQTTGKGNVTLKELNARPMEVFMCSVLKRQGYGEGFRWLSQYID</sequence>
<accession>Q3T0D7</accession>
<name>SAR1A_BOVIN</name>
<protein>
    <recommendedName>
        <fullName evidence="1">Small COPII coat GTPase SAR1A</fullName>
        <ecNumber evidence="1">3.6.5.2</ecNumber>
    </recommendedName>
</protein>
<comment type="function">
    <text evidence="1">Small GTPase that cycles between an active GTP-bound and an inactive GDP-bound state and mainly functions in vesicle-mediated endoplasmic reticulum (ER) to Golgi transport. The active GTP-bound form inserts into the endoplasmic reticulum membrane where it recruits the remainder of the coat protein complex II/COPII. The coat protein complex II assembling and polymerizing on endoplasmic reticulum membrane is responsible for both the sorting of cargos and the deformation and budding of membranes into vesicles destined to the Golgi. The GTPase activity of SAR1 by controlling the timing of COPII budding regulates the size of the formed vesicles and is important for cargo selection depending on their size. Together with SEC16A, forms the organized scaffold defining endoplasmic reticulum exit sites (ERES), some specific domains of the endoplasmic reticulum where COPII vesicles form. In addition to its role in vesicle trafficking, can also function as a leucine sensor regulating TORC1 signaling and more indirectly cellular metabolism, growth and survival. In absence of leucine, interacts with the GATOR2 complex via MIOS and inhibits TORC1 signaling. The binding of leucine abrogates the interaction with GATOR2 and the inhibition of the TORC1 signaling. This function is completely independent of the GTPase activity of SAR1B.</text>
</comment>
<comment type="catalytic activity">
    <reaction evidence="1">
        <text>GTP + H2O = GDP + phosphate + H(+)</text>
        <dbReference type="Rhea" id="RHEA:19669"/>
        <dbReference type="ChEBI" id="CHEBI:15377"/>
        <dbReference type="ChEBI" id="CHEBI:15378"/>
        <dbReference type="ChEBI" id="CHEBI:37565"/>
        <dbReference type="ChEBI" id="CHEBI:43474"/>
        <dbReference type="ChEBI" id="CHEBI:58189"/>
        <dbReference type="EC" id="3.6.5.2"/>
    </reaction>
    <physiologicalReaction direction="left-to-right" evidence="1">
        <dbReference type="Rhea" id="RHEA:19670"/>
    </physiologicalReaction>
</comment>
<comment type="activity regulation">
    <text evidence="1">Small GTPases activation is mediated by guanine exchange factors (GEF), while inactivation through hydrolysis of the bound GTP is stimulated by GTPase activating proteins (GAP). Activated by the guanine nucleotide exchange factor PREB/SEC12 that facilitates the loading of SAR1B with GTP.</text>
</comment>
<comment type="subunit">
    <text evidence="1">Homodimer; upon association with membrane. Part of the coat protein complex II/COPII, composed of SEC23/24 and SEC13/31 heterodimers, that it helps recruit and assemble on endoplasmic reticulum (ER) membranes at ER exit sites. Interacts with PREB; PREB acts as a guanine nucleotide exchange factor facilitating the activation of SAR1B by loading it with GTP. Interacts with B3GAT1. Interacts with MIOS; the interaction is direct, disrupted by the binding of leucine and mediates the interaction of SAR1A with the GATOR2 complex to negatively regulate the TORC1 signaling upon leucine deprivation.</text>
</comment>
<comment type="subcellular location">
    <subcellularLocation>
        <location evidence="1">Endoplasmic reticulum membrane</location>
        <topology evidence="1">Peripheral membrane protein</topology>
    </subcellularLocation>
    <subcellularLocation>
        <location evidence="1">Golgi apparatus</location>
        <location evidence="1">Golgi stack membrane</location>
        <topology evidence="1">Peripheral membrane protein</topology>
    </subcellularLocation>
    <subcellularLocation>
        <location evidence="1">Cytoplasm</location>
        <location evidence="1">Cytosol</location>
    </subcellularLocation>
    <subcellularLocation>
        <location evidence="1">Lysosome membrane</location>
    </subcellularLocation>
    <text evidence="1">Active at endoplasmic reticulum exit sites (ERES) where it inserts into the membrane and recruits the remainder of the coat protein complex II/COPII. Upon leucine deprivation, associates with lysosomal membranes to repress TORC1 signaling.</text>
</comment>
<comment type="similarity">
    <text evidence="4">Belongs to the small GTPase superfamily. SAR1 family.</text>
</comment>
<dbReference type="EC" id="3.6.5.2" evidence="1"/>
<dbReference type="EMBL" id="BC102443">
    <property type="protein sequence ID" value="AAI02444.1"/>
    <property type="molecule type" value="mRNA"/>
</dbReference>
<dbReference type="RefSeq" id="NP_001029693.1">
    <property type="nucleotide sequence ID" value="NM_001034521.2"/>
</dbReference>
<dbReference type="RefSeq" id="XP_005226441.1">
    <property type="nucleotide sequence ID" value="XM_005226384.5"/>
</dbReference>
<dbReference type="RefSeq" id="XP_005226442.1">
    <property type="nucleotide sequence ID" value="XM_005226385.5"/>
</dbReference>
<dbReference type="RefSeq" id="XP_024842423.1">
    <property type="nucleotide sequence ID" value="XM_024986655.2"/>
</dbReference>
<dbReference type="SMR" id="Q3T0D7"/>
<dbReference type="FunCoup" id="Q3T0D7">
    <property type="interactions" value="3163"/>
</dbReference>
<dbReference type="STRING" id="9913.ENSBTAP00000022422"/>
<dbReference type="PaxDb" id="9913-ENSBTAP00000022422"/>
<dbReference type="PeptideAtlas" id="Q3T0D7"/>
<dbReference type="Ensembl" id="ENSBTAT00000022422.4">
    <property type="protein sequence ID" value="ENSBTAP00000022422.2"/>
    <property type="gene ID" value="ENSBTAG00000016858.4"/>
</dbReference>
<dbReference type="GeneID" id="517171"/>
<dbReference type="KEGG" id="bta:517171"/>
<dbReference type="CTD" id="56681"/>
<dbReference type="VEuPathDB" id="HostDB:ENSBTAG00000016858"/>
<dbReference type="VGNC" id="VGNC:34286">
    <property type="gene designation" value="SAR1A"/>
</dbReference>
<dbReference type="eggNOG" id="KOG0077">
    <property type="taxonomic scope" value="Eukaryota"/>
</dbReference>
<dbReference type="GeneTree" id="ENSGT00940000155276"/>
<dbReference type="HOGENOM" id="CLU_040729_6_0_1"/>
<dbReference type="InParanoid" id="Q3T0D7"/>
<dbReference type="OMA" id="GLWNKHG"/>
<dbReference type="OrthoDB" id="15478at2759"/>
<dbReference type="TreeFam" id="TF312890"/>
<dbReference type="Proteomes" id="UP000009136">
    <property type="component" value="Chromosome 28"/>
</dbReference>
<dbReference type="Bgee" id="ENSBTAG00000016858">
    <property type="expression patterns" value="Expressed in oocyte and 106 other cell types or tissues"/>
</dbReference>
<dbReference type="GO" id="GO:0030127">
    <property type="term" value="C:COPII vesicle coat"/>
    <property type="evidence" value="ECO:0000250"/>
    <property type="project" value="UniProtKB"/>
</dbReference>
<dbReference type="GO" id="GO:0005829">
    <property type="term" value="C:cytosol"/>
    <property type="evidence" value="ECO:0007669"/>
    <property type="project" value="UniProtKB-SubCell"/>
</dbReference>
<dbReference type="GO" id="GO:0070971">
    <property type="term" value="C:endoplasmic reticulum exit site"/>
    <property type="evidence" value="ECO:0000250"/>
    <property type="project" value="UniProtKB"/>
</dbReference>
<dbReference type="GO" id="GO:0005789">
    <property type="term" value="C:endoplasmic reticulum membrane"/>
    <property type="evidence" value="ECO:0007669"/>
    <property type="project" value="UniProtKB-SubCell"/>
</dbReference>
<dbReference type="GO" id="GO:0032580">
    <property type="term" value="C:Golgi cisterna membrane"/>
    <property type="evidence" value="ECO:0007669"/>
    <property type="project" value="UniProtKB-SubCell"/>
</dbReference>
<dbReference type="GO" id="GO:0005765">
    <property type="term" value="C:lysosomal membrane"/>
    <property type="evidence" value="ECO:0007669"/>
    <property type="project" value="UniProtKB-SubCell"/>
</dbReference>
<dbReference type="GO" id="GO:0140785">
    <property type="term" value="F:amino acid sensor activity"/>
    <property type="evidence" value="ECO:0007669"/>
    <property type="project" value="Ensembl"/>
</dbReference>
<dbReference type="GO" id="GO:0003925">
    <property type="term" value="F:G protein activity"/>
    <property type="evidence" value="ECO:0000250"/>
    <property type="project" value="UniProtKB"/>
</dbReference>
<dbReference type="GO" id="GO:0005525">
    <property type="term" value="F:GTP binding"/>
    <property type="evidence" value="ECO:0007669"/>
    <property type="project" value="UniProtKB-KW"/>
</dbReference>
<dbReference type="GO" id="GO:0003924">
    <property type="term" value="F:GTPase activity"/>
    <property type="evidence" value="ECO:0000318"/>
    <property type="project" value="GO_Central"/>
</dbReference>
<dbReference type="GO" id="GO:0046872">
    <property type="term" value="F:metal ion binding"/>
    <property type="evidence" value="ECO:0007669"/>
    <property type="project" value="UniProtKB-KW"/>
</dbReference>
<dbReference type="GO" id="GO:1990253">
    <property type="term" value="P:cellular response to leucine starvation"/>
    <property type="evidence" value="ECO:0007669"/>
    <property type="project" value="Ensembl"/>
</dbReference>
<dbReference type="GO" id="GO:0048208">
    <property type="term" value="P:COPII vesicle coating"/>
    <property type="evidence" value="ECO:0000250"/>
    <property type="project" value="UniProtKB"/>
</dbReference>
<dbReference type="GO" id="GO:0090110">
    <property type="term" value="P:COPII-coated vesicle cargo loading"/>
    <property type="evidence" value="ECO:0000250"/>
    <property type="project" value="UniProtKB"/>
</dbReference>
<dbReference type="GO" id="GO:0006888">
    <property type="term" value="P:endoplasmic reticulum to Golgi vesicle-mediated transport"/>
    <property type="evidence" value="ECO:0000250"/>
    <property type="project" value="UniProtKB"/>
</dbReference>
<dbReference type="GO" id="GO:0006886">
    <property type="term" value="P:intracellular protein transport"/>
    <property type="evidence" value="ECO:0007669"/>
    <property type="project" value="InterPro"/>
</dbReference>
<dbReference type="GO" id="GO:0061024">
    <property type="term" value="P:membrane organization"/>
    <property type="evidence" value="ECO:0000318"/>
    <property type="project" value="GO_Central"/>
</dbReference>
<dbReference type="GO" id="GO:1904262">
    <property type="term" value="P:negative regulation of TORC1 signaling"/>
    <property type="evidence" value="ECO:0007669"/>
    <property type="project" value="Ensembl"/>
</dbReference>
<dbReference type="GO" id="GO:0003400">
    <property type="term" value="P:regulation of COPII vesicle coating"/>
    <property type="evidence" value="ECO:0000318"/>
    <property type="project" value="GO_Central"/>
</dbReference>
<dbReference type="GO" id="GO:0016050">
    <property type="term" value="P:vesicle organization"/>
    <property type="evidence" value="ECO:0000318"/>
    <property type="project" value="GO_Central"/>
</dbReference>
<dbReference type="CDD" id="cd00879">
    <property type="entry name" value="Sar1"/>
    <property type="match status" value="1"/>
</dbReference>
<dbReference type="FunFam" id="3.40.50.300:FF:000161">
    <property type="entry name" value="Small COPII coat GTPase"/>
    <property type="match status" value="1"/>
</dbReference>
<dbReference type="Gene3D" id="3.40.50.300">
    <property type="entry name" value="P-loop containing nucleotide triphosphate hydrolases"/>
    <property type="match status" value="1"/>
</dbReference>
<dbReference type="InterPro" id="IPR027417">
    <property type="entry name" value="P-loop_NTPase"/>
</dbReference>
<dbReference type="InterPro" id="IPR005225">
    <property type="entry name" value="Small_GTP-bd"/>
</dbReference>
<dbReference type="InterPro" id="IPR006689">
    <property type="entry name" value="Small_GTPase_ARF/SAR"/>
</dbReference>
<dbReference type="InterPro" id="IPR006687">
    <property type="entry name" value="Small_GTPase_SAR1"/>
</dbReference>
<dbReference type="NCBIfam" id="TIGR00231">
    <property type="entry name" value="small_GTP"/>
    <property type="match status" value="1"/>
</dbReference>
<dbReference type="PANTHER" id="PTHR45684">
    <property type="entry name" value="RE74312P"/>
    <property type="match status" value="1"/>
</dbReference>
<dbReference type="Pfam" id="PF00025">
    <property type="entry name" value="Arf"/>
    <property type="match status" value="1"/>
</dbReference>
<dbReference type="PRINTS" id="PR00328">
    <property type="entry name" value="SAR1GTPBP"/>
</dbReference>
<dbReference type="SMART" id="SM00177">
    <property type="entry name" value="ARF"/>
    <property type="match status" value="1"/>
</dbReference>
<dbReference type="SMART" id="SM00178">
    <property type="entry name" value="SAR"/>
    <property type="match status" value="1"/>
</dbReference>
<dbReference type="SUPFAM" id="SSF52540">
    <property type="entry name" value="P-loop containing nucleoside triphosphate hydrolases"/>
    <property type="match status" value="1"/>
</dbReference>
<dbReference type="PROSITE" id="PS51422">
    <property type="entry name" value="SAR1"/>
    <property type="match status" value="1"/>
</dbReference>
<gene>
    <name evidence="1" type="primary">SAR1A</name>
</gene>
<organism>
    <name type="scientific">Bos taurus</name>
    <name type="common">Bovine</name>
    <dbReference type="NCBI Taxonomy" id="9913"/>
    <lineage>
        <taxon>Eukaryota</taxon>
        <taxon>Metazoa</taxon>
        <taxon>Chordata</taxon>
        <taxon>Craniata</taxon>
        <taxon>Vertebrata</taxon>
        <taxon>Euteleostomi</taxon>
        <taxon>Mammalia</taxon>
        <taxon>Eutheria</taxon>
        <taxon>Laurasiatheria</taxon>
        <taxon>Artiodactyla</taxon>
        <taxon>Ruminantia</taxon>
        <taxon>Pecora</taxon>
        <taxon>Bovidae</taxon>
        <taxon>Bovinae</taxon>
        <taxon>Bos</taxon>
    </lineage>
</organism>
<keyword id="KW-0963">Cytoplasm</keyword>
<keyword id="KW-0256">Endoplasmic reticulum</keyword>
<keyword id="KW-0931">ER-Golgi transport</keyword>
<keyword id="KW-0333">Golgi apparatus</keyword>
<keyword id="KW-0342">GTP-binding</keyword>
<keyword id="KW-0378">Hydrolase</keyword>
<keyword id="KW-0458">Lysosome</keyword>
<keyword id="KW-0460">Magnesium</keyword>
<keyword id="KW-0472">Membrane</keyword>
<keyword id="KW-0479">Metal-binding</keyword>
<keyword id="KW-0547">Nucleotide-binding</keyword>
<keyword id="KW-0597">Phosphoprotein</keyword>
<keyword id="KW-0653">Protein transport</keyword>
<keyword id="KW-1185">Reference proteome</keyword>
<keyword id="KW-0813">Transport</keyword>